<accession>Q9CNF6</accession>
<dbReference type="EC" id="1.7.1.13" evidence="1"/>
<dbReference type="EMBL" id="AE004439">
    <property type="protein sequence ID" value="AAK02560.1"/>
    <property type="molecule type" value="Genomic_DNA"/>
</dbReference>
<dbReference type="RefSeq" id="WP_010906669.1">
    <property type="nucleotide sequence ID" value="NC_002663.1"/>
</dbReference>
<dbReference type="SMR" id="Q9CNF6"/>
<dbReference type="STRING" id="272843.PM0476"/>
<dbReference type="EnsemblBacteria" id="AAK02560">
    <property type="protein sequence ID" value="AAK02560"/>
    <property type="gene ID" value="PM0476"/>
</dbReference>
<dbReference type="KEGG" id="pmu:PM0476"/>
<dbReference type="PATRIC" id="fig|272843.6.peg.489"/>
<dbReference type="HOGENOM" id="CLU_054738_0_0_6"/>
<dbReference type="OrthoDB" id="9789995at2"/>
<dbReference type="UniPathway" id="UPA00392"/>
<dbReference type="Proteomes" id="UP000000809">
    <property type="component" value="Chromosome"/>
</dbReference>
<dbReference type="GO" id="GO:0005737">
    <property type="term" value="C:cytoplasm"/>
    <property type="evidence" value="ECO:0007669"/>
    <property type="project" value="UniProtKB-SubCell"/>
</dbReference>
<dbReference type="GO" id="GO:0033739">
    <property type="term" value="F:preQ1 synthase activity"/>
    <property type="evidence" value="ECO:0007669"/>
    <property type="project" value="UniProtKB-UniRule"/>
</dbReference>
<dbReference type="GO" id="GO:0008616">
    <property type="term" value="P:queuosine biosynthetic process"/>
    <property type="evidence" value="ECO:0007669"/>
    <property type="project" value="UniProtKB-UniRule"/>
</dbReference>
<dbReference type="GO" id="GO:0006400">
    <property type="term" value="P:tRNA modification"/>
    <property type="evidence" value="ECO:0007669"/>
    <property type="project" value="UniProtKB-UniRule"/>
</dbReference>
<dbReference type="Gene3D" id="3.30.1130.10">
    <property type="match status" value="2"/>
</dbReference>
<dbReference type="HAMAP" id="MF_00817">
    <property type="entry name" value="QueF_type2"/>
    <property type="match status" value="1"/>
</dbReference>
<dbReference type="InterPro" id="IPR043133">
    <property type="entry name" value="GTP-CH-I_C/QueF"/>
</dbReference>
<dbReference type="InterPro" id="IPR050084">
    <property type="entry name" value="NADPH_dep_7-cyano-7-deazaG_red"/>
</dbReference>
<dbReference type="InterPro" id="IPR029500">
    <property type="entry name" value="QueF"/>
</dbReference>
<dbReference type="InterPro" id="IPR029139">
    <property type="entry name" value="QueF_N"/>
</dbReference>
<dbReference type="InterPro" id="IPR016428">
    <property type="entry name" value="QueF_type2"/>
</dbReference>
<dbReference type="NCBIfam" id="TIGR03138">
    <property type="entry name" value="QueF"/>
    <property type="match status" value="1"/>
</dbReference>
<dbReference type="PANTHER" id="PTHR34354">
    <property type="entry name" value="NADPH-DEPENDENT 7-CYANO-7-DEAZAGUANINE REDUCTASE"/>
    <property type="match status" value="1"/>
</dbReference>
<dbReference type="PANTHER" id="PTHR34354:SF1">
    <property type="entry name" value="NADPH-DEPENDENT 7-CYANO-7-DEAZAGUANINE REDUCTASE"/>
    <property type="match status" value="1"/>
</dbReference>
<dbReference type="Pfam" id="PF14489">
    <property type="entry name" value="QueF"/>
    <property type="match status" value="1"/>
</dbReference>
<dbReference type="Pfam" id="PF14819">
    <property type="entry name" value="QueF_N"/>
    <property type="match status" value="1"/>
</dbReference>
<dbReference type="PIRSF" id="PIRSF004750">
    <property type="entry name" value="Nitrile_oxidored_YqcD_prd"/>
    <property type="match status" value="1"/>
</dbReference>
<dbReference type="SUPFAM" id="SSF55620">
    <property type="entry name" value="Tetrahydrobiopterin biosynthesis enzymes-like"/>
    <property type="match status" value="1"/>
</dbReference>
<proteinExistence type="inferred from homology"/>
<sequence>MQYQHDSLDKLKLGQQTQYASNYDHTLLQPVPRHLNRDTLGITHTQPFHFGADIWTAYEISWLNLNGLPQVAIADVAIDFQSENLIESKSFKLYLNSFNQSKFATFEEVQQHLTQDLSNCAKGKVSVKLHPLSKYCHEPIVELAGECIDQQDIEINDYQFNPEILTNCTHDQMVKESLVSHLLKSNCLITNQPDWGTLQIRYEGKQIDREKLLRYIISFRQHNEFHEQCVERIFCDLMQFAKPDKLTVYARYTRRGGLDINPFRSNFEAVPDNQRLARQ</sequence>
<gene>
    <name evidence="1" type="primary">queF</name>
    <name type="ordered locus">PM0476</name>
</gene>
<reference key="1">
    <citation type="journal article" date="2001" name="Proc. Natl. Acad. Sci. U.S.A.">
        <title>Complete genomic sequence of Pasteurella multocida Pm70.</title>
        <authorList>
            <person name="May B.J."/>
            <person name="Zhang Q."/>
            <person name="Li L.L."/>
            <person name="Paustian M.L."/>
            <person name="Whittam T.S."/>
            <person name="Kapur V."/>
        </authorList>
    </citation>
    <scope>NUCLEOTIDE SEQUENCE [LARGE SCALE GENOMIC DNA]</scope>
    <source>
        <strain>Pm70</strain>
    </source>
</reference>
<protein>
    <recommendedName>
        <fullName evidence="1">NADPH-dependent 7-cyano-7-deazaguanine reductase</fullName>
        <ecNumber evidence="1">1.7.1.13</ecNumber>
    </recommendedName>
    <alternativeName>
        <fullName evidence="1">7-cyano-7-carbaguanine reductase</fullName>
    </alternativeName>
    <alternativeName>
        <fullName evidence="1">NADPH-dependent nitrile oxidoreductase</fullName>
    </alternativeName>
    <alternativeName>
        <fullName evidence="1">PreQ(0) reductase</fullName>
    </alternativeName>
</protein>
<feature type="chain" id="PRO_0000163041" description="NADPH-dependent 7-cyano-7-deazaguanine reductase">
    <location>
        <begin position="1"/>
        <end position="279"/>
    </location>
</feature>
<feature type="active site" description="Thioimide intermediate" evidence="1">
    <location>
        <position position="187"/>
    </location>
</feature>
<feature type="active site" description="Proton donor" evidence="1">
    <location>
        <position position="194"/>
    </location>
</feature>
<feature type="binding site" evidence="1">
    <location>
        <begin position="86"/>
        <end position="88"/>
    </location>
    <ligand>
        <name>substrate</name>
    </ligand>
</feature>
<feature type="binding site" evidence="1">
    <location>
        <begin position="88"/>
        <end position="89"/>
    </location>
    <ligand>
        <name>NADPH</name>
        <dbReference type="ChEBI" id="CHEBI:57783"/>
    </ligand>
</feature>
<feature type="binding site" evidence="1">
    <location>
        <begin position="226"/>
        <end position="227"/>
    </location>
    <ligand>
        <name>substrate</name>
    </ligand>
</feature>
<feature type="binding site" evidence="1">
    <location>
        <begin position="255"/>
        <end position="256"/>
    </location>
    <ligand>
        <name>NADPH</name>
        <dbReference type="ChEBI" id="CHEBI:57783"/>
    </ligand>
</feature>
<keyword id="KW-0963">Cytoplasm</keyword>
<keyword id="KW-0521">NADP</keyword>
<keyword id="KW-0560">Oxidoreductase</keyword>
<keyword id="KW-0671">Queuosine biosynthesis</keyword>
<keyword id="KW-1185">Reference proteome</keyword>
<name>QUEF_PASMU</name>
<evidence type="ECO:0000255" key="1">
    <source>
        <dbReference type="HAMAP-Rule" id="MF_00817"/>
    </source>
</evidence>
<organism>
    <name type="scientific">Pasteurella multocida (strain Pm70)</name>
    <dbReference type="NCBI Taxonomy" id="272843"/>
    <lineage>
        <taxon>Bacteria</taxon>
        <taxon>Pseudomonadati</taxon>
        <taxon>Pseudomonadota</taxon>
        <taxon>Gammaproteobacteria</taxon>
        <taxon>Pasteurellales</taxon>
        <taxon>Pasteurellaceae</taxon>
        <taxon>Pasteurella</taxon>
    </lineage>
</organism>
<comment type="function">
    <text evidence="1">Catalyzes the NADPH-dependent reduction of 7-cyano-7-deazaguanine (preQ0) to 7-aminomethyl-7-deazaguanine (preQ1).</text>
</comment>
<comment type="catalytic activity">
    <reaction evidence="1">
        <text>7-aminomethyl-7-carbaguanine + 2 NADP(+) = 7-cyano-7-deazaguanine + 2 NADPH + 3 H(+)</text>
        <dbReference type="Rhea" id="RHEA:13409"/>
        <dbReference type="ChEBI" id="CHEBI:15378"/>
        <dbReference type="ChEBI" id="CHEBI:45075"/>
        <dbReference type="ChEBI" id="CHEBI:57783"/>
        <dbReference type="ChEBI" id="CHEBI:58349"/>
        <dbReference type="ChEBI" id="CHEBI:58703"/>
        <dbReference type="EC" id="1.7.1.13"/>
    </reaction>
</comment>
<comment type="pathway">
    <text evidence="1">tRNA modification; tRNA-queuosine biosynthesis.</text>
</comment>
<comment type="subunit">
    <text evidence="1">Homodimer.</text>
</comment>
<comment type="subcellular location">
    <subcellularLocation>
        <location evidence="1">Cytoplasm</location>
    </subcellularLocation>
</comment>
<comment type="similarity">
    <text evidence="1">Belongs to the GTP cyclohydrolase I family. QueF type 2 subfamily.</text>
</comment>